<evidence type="ECO:0000305" key="1"/>
<accession>O22466</accession>
<name>MSI1_SOLLC</name>
<dbReference type="EMBL" id="AF016845">
    <property type="protein sequence ID" value="AAB70241.1"/>
    <property type="molecule type" value="mRNA"/>
</dbReference>
<dbReference type="PIR" id="T04324">
    <property type="entry name" value="T04324"/>
</dbReference>
<dbReference type="RefSeq" id="NP_001234002.1">
    <property type="nucleotide sequence ID" value="NM_001247073.2"/>
</dbReference>
<dbReference type="SMR" id="O22466"/>
<dbReference type="FunCoup" id="O22466">
    <property type="interactions" value="3813"/>
</dbReference>
<dbReference type="STRING" id="4081.O22466"/>
<dbReference type="PaxDb" id="4081-Solyc01g104510.2.1"/>
<dbReference type="EnsemblPlants" id="Solyc01g104510.3.1">
    <property type="protein sequence ID" value="Solyc01g104510.3.1"/>
    <property type="gene ID" value="Solyc01g104510.3"/>
</dbReference>
<dbReference type="GeneID" id="543534"/>
<dbReference type="Gramene" id="Solyc01g104510.3.1">
    <property type="protein sequence ID" value="Solyc01g104510.3.1"/>
    <property type="gene ID" value="Solyc01g104510.3"/>
</dbReference>
<dbReference type="KEGG" id="sly:543534"/>
<dbReference type="eggNOG" id="KOG0264">
    <property type="taxonomic scope" value="Eukaryota"/>
</dbReference>
<dbReference type="HOGENOM" id="CLU_020445_3_1_1"/>
<dbReference type="InParanoid" id="O22466"/>
<dbReference type="OMA" id="PHEEGCL"/>
<dbReference type="OrthoDB" id="427795at2759"/>
<dbReference type="PhylomeDB" id="O22466"/>
<dbReference type="Proteomes" id="UP000004994">
    <property type="component" value="Chromosome 1"/>
</dbReference>
<dbReference type="ExpressionAtlas" id="O22466">
    <property type="expression patterns" value="baseline and differential"/>
</dbReference>
<dbReference type="GO" id="GO:0005634">
    <property type="term" value="C:nucleus"/>
    <property type="evidence" value="ECO:0000318"/>
    <property type="project" value="GO_Central"/>
</dbReference>
<dbReference type="GO" id="GO:0042393">
    <property type="term" value="F:histone binding"/>
    <property type="evidence" value="ECO:0000318"/>
    <property type="project" value="GO_Central"/>
</dbReference>
<dbReference type="GO" id="GO:0006338">
    <property type="term" value="P:chromatin remodeling"/>
    <property type="evidence" value="ECO:0000318"/>
    <property type="project" value="GO_Central"/>
</dbReference>
<dbReference type="GO" id="GO:0006281">
    <property type="term" value="P:DNA repair"/>
    <property type="evidence" value="ECO:0007669"/>
    <property type="project" value="UniProtKB-KW"/>
</dbReference>
<dbReference type="GO" id="GO:0006260">
    <property type="term" value="P:DNA replication"/>
    <property type="evidence" value="ECO:0007669"/>
    <property type="project" value="UniProtKB-KW"/>
</dbReference>
<dbReference type="GO" id="GO:0006355">
    <property type="term" value="P:regulation of DNA-templated transcription"/>
    <property type="evidence" value="ECO:0000318"/>
    <property type="project" value="GO_Central"/>
</dbReference>
<dbReference type="FunFam" id="2.130.10.10:FF:000512">
    <property type="entry name" value="WD-40 repeat-containing protein MSI1"/>
    <property type="match status" value="1"/>
</dbReference>
<dbReference type="Gene3D" id="2.130.10.10">
    <property type="entry name" value="YVTN repeat-like/Quinoprotein amine dehydrogenase"/>
    <property type="match status" value="1"/>
</dbReference>
<dbReference type="InterPro" id="IPR020472">
    <property type="entry name" value="G-protein_beta_WD-40_rep"/>
</dbReference>
<dbReference type="InterPro" id="IPR022052">
    <property type="entry name" value="Histone-bd_RBBP4-like_N"/>
</dbReference>
<dbReference type="InterPro" id="IPR015943">
    <property type="entry name" value="WD40/YVTN_repeat-like_dom_sf"/>
</dbReference>
<dbReference type="InterPro" id="IPR019775">
    <property type="entry name" value="WD40_repeat_CS"/>
</dbReference>
<dbReference type="InterPro" id="IPR036322">
    <property type="entry name" value="WD40_repeat_dom_sf"/>
</dbReference>
<dbReference type="InterPro" id="IPR001680">
    <property type="entry name" value="WD40_rpt"/>
</dbReference>
<dbReference type="InterPro" id="IPR050459">
    <property type="entry name" value="WD_repeat_RBAP46/RBAP48/MSI1"/>
</dbReference>
<dbReference type="PANTHER" id="PTHR22850">
    <property type="entry name" value="WD40 REPEAT FAMILY"/>
    <property type="match status" value="1"/>
</dbReference>
<dbReference type="Pfam" id="PF12265">
    <property type="entry name" value="CAF1C_H4-bd"/>
    <property type="match status" value="1"/>
</dbReference>
<dbReference type="Pfam" id="PF00400">
    <property type="entry name" value="WD40"/>
    <property type="match status" value="5"/>
</dbReference>
<dbReference type="PRINTS" id="PR00320">
    <property type="entry name" value="GPROTEINBRPT"/>
</dbReference>
<dbReference type="SMART" id="SM00320">
    <property type="entry name" value="WD40"/>
    <property type="match status" value="6"/>
</dbReference>
<dbReference type="SUPFAM" id="SSF50978">
    <property type="entry name" value="WD40 repeat-like"/>
    <property type="match status" value="1"/>
</dbReference>
<dbReference type="PROSITE" id="PS00678">
    <property type="entry name" value="WD_REPEATS_1"/>
    <property type="match status" value="1"/>
</dbReference>
<dbReference type="PROSITE" id="PS50082">
    <property type="entry name" value="WD_REPEATS_2"/>
    <property type="match status" value="5"/>
</dbReference>
<dbReference type="PROSITE" id="PS50294">
    <property type="entry name" value="WD_REPEATS_REGION"/>
    <property type="match status" value="1"/>
</dbReference>
<proteinExistence type="evidence at transcript level"/>
<comment type="subcellular location">
    <subcellularLocation>
        <location>Nucleus</location>
    </subcellularLocation>
</comment>
<comment type="similarity">
    <text evidence="1">Belongs to the WD repeat RBAP46/RBAP48/MSI1 family.</text>
</comment>
<feature type="chain" id="PRO_0000051085" description="Histone-binding protein MSI1">
    <location>
        <begin position="1"/>
        <end position="424"/>
    </location>
</feature>
<feature type="repeat" description="WD 1">
    <location>
        <begin position="123"/>
        <end position="163"/>
    </location>
</feature>
<feature type="repeat" description="WD 2">
    <location>
        <begin position="176"/>
        <end position="216"/>
    </location>
</feature>
<feature type="repeat" description="WD 3">
    <location>
        <begin position="225"/>
        <end position="265"/>
    </location>
</feature>
<feature type="repeat" description="WD 4">
    <location>
        <begin position="271"/>
        <end position="311"/>
    </location>
</feature>
<feature type="repeat" description="WD 5">
    <location>
        <begin position="315"/>
        <end position="355"/>
    </location>
</feature>
<feature type="repeat" description="WD 6">
    <location>
        <begin position="372"/>
        <end position="412"/>
    </location>
</feature>
<gene>
    <name type="primary">MSI1</name>
</gene>
<sequence>MGKDEDEMRGEIEERLINEEYKIWKKNTPFLYDLVITHALEWPSLTVEWLPDREEPSGKDYSVQKMILGTHTSENEPNYLMLAQVQLPLEDAENDARHYDDDRSEFGGFGCANGKVQIIQQINHDGEVNRARYMPQNPFIIATKTVSAEVYVFDYSKHPSKPPLDGACNPDLRLRGHSTEGYGLSWSQFKQGHLLSGSDDSHICLWDINATPKNKALEAMQIFKVHEGVVEDVAWHLRHEYLFGSVGDDQYLHVWDLRTPSVTKPIQSVVAHQSEVNCLAFNPFNEWVVATGSTDKTVKLFDLRKISTALHTLDCHKEEVFQVGWNPKNETILASCCLGRRLMVWDLSRIDEEQTPEDAEDGPPELLFIHGGHTSKISDFSWNPCEDWVVASVAEDNILQIWQMAENIYHDEDDLPGDDAPKGP</sequence>
<organism>
    <name type="scientific">Solanum lycopersicum</name>
    <name type="common">Tomato</name>
    <name type="synonym">Lycopersicon esculentum</name>
    <dbReference type="NCBI Taxonomy" id="4081"/>
    <lineage>
        <taxon>Eukaryota</taxon>
        <taxon>Viridiplantae</taxon>
        <taxon>Streptophyta</taxon>
        <taxon>Embryophyta</taxon>
        <taxon>Tracheophyta</taxon>
        <taxon>Spermatophyta</taxon>
        <taxon>Magnoliopsida</taxon>
        <taxon>eudicotyledons</taxon>
        <taxon>Gunneridae</taxon>
        <taxon>Pentapetalae</taxon>
        <taxon>asterids</taxon>
        <taxon>lamiids</taxon>
        <taxon>Solanales</taxon>
        <taxon>Solanaceae</taxon>
        <taxon>Solanoideae</taxon>
        <taxon>Solaneae</taxon>
        <taxon>Solanum</taxon>
        <taxon>Solanum subgen. Lycopersicon</taxon>
    </lineage>
</organism>
<reference key="1">
    <citation type="journal article" date="1997" name="Plant Cell">
        <title>A conserved family of WD-40 proteins binds to the retinoblastoma protein in both plants and animals.</title>
        <authorList>
            <person name="Ach R.A."/>
            <person name="Taranto P."/>
            <person name="Gruissem W."/>
        </authorList>
    </citation>
    <scope>NUCLEOTIDE SEQUENCE [MRNA]</scope>
</reference>
<protein>
    <recommendedName>
        <fullName evidence="1">Histone-binding protein MSI1</fullName>
    </recommendedName>
    <alternativeName>
        <fullName evidence="1">Chromatin assembly factor 1 subunit C</fullName>
        <shortName evidence="1">CAF-1 subunit C</shortName>
    </alternativeName>
    <alternativeName>
        <fullName>WD-40 repeat-containing protein MSI1</fullName>
    </alternativeName>
</protein>
<keyword id="KW-0143">Chaperone</keyword>
<keyword id="KW-0156">Chromatin regulator</keyword>
<keyword id="KW-0227">DNA damage</keyword>
<keyword id="KW-0234">DNA repair</keyword>
<keyword id="KW-0235">DNA replication</keyword>
<keyword id="KW-0539">Nucleus</keyword>
<keyword id="KW-1185">Reference proteome</keyword>
<keyword id="KW-0677">Repeat</keyword>
<keyword id="KW-0853">WD repeat</keyword>